<feature type="initiator methionine" description="Removed" evidence="1">
    <location>
        <position position="1"/>
    </location>
</feature>
<feature type="chain" id="PRO_0000124981" description="Large ribosomal subunit protein uL5">
    <location>
        <begin position="2"/>
        <end position="179"/>
    </location>
</feature>
<sequence>MAKLHDYYKDEVVNKLMTEFNYNSVMQVPRVEKITLNMGVGEAIADKKLLDNAAADLTAISGQKPLITKARKSVAGFKIRQGYPIGCKVTLRGERMWEFFERLITIAVPRIRDFRGLSAKSFDGRGNYSMGVREQIIFPEIDYDKVDRVRGLDITITTTAKSDEEGRALLAAFDFPFRK</sequence>
<accession>P62405</accession>
<accession>P37436</accession>
<gene>
    <name evidence="2" type="primary">rplE</name>
    <name type="ordered locus">STM3428</name>
</gene>
<dbReference type="EMBL" id="AE006468">
    <property type="protein sequence ID" value="AAL22291.1"/>
    <property type="molecule type" value="Genomic_DNA"/>
</dbReference>
<dbReference type="EMBL" id="M36266">
    <property type="protein sequence ID" value="AAA27228.1"/>
    <property type="molecule type" value="Genomic_DNA"/>
</dbReference>
<dbReference type="RefSeq" id="NP_462332.1">
    <property type="nucleotide sequence ID" value="NC_003197.2"/>
</dbReference>
<dbReference type="RefSeq" id="WP_001096206.1">
    <property type="nucleotide sequence ID" value="NC_003197.2"/>
</dbReference>
<dbReference type="SMR" id="P62405"/>
<dbReference type="STRING" id="99287.STM3428"/>
<dbReference type="PaxDb" id="99287-STM3428"/>
<dbReference type="GeneID" id="1254951"/>
<dbReference type="GeneID" id="93751944"/>
<dbReference type="KEGG" id="stm:STM3428"/>
<dbReference type="PATRIC" id="fig|99287.12.peg.3625"/>
<dbReference type="HOGENOM" id="CLU_061015_2_1_6"/>
<dbReference type="OMA" id="PIGCAVT"/>
<dbReference type="PhylomeDB" id="P62405"/>
<dbReference type="BioCyc" id="SENT99287:STM3428-MONOMER"/>
<dbReference type="Proteomes" id="UP000001014">
    <property type="component" value="Chromosome"/>
</dbReference>
<dbReference type="GO" id="GO:0022625">
    <property type="term" value="C:cytosolic large ribosomal subunit"/>
    <property type="evidence" value="ECO:0000318"/>
    <property type="project" value="GO_Central"/>
</dbReference>
<dbReference type="GO" id="GO:0003723">
    <property type="term" value="F:RNA binding"/>
    <property type="evidence" value="ECO:0000318"/>
    <property type="project" value="GO_Central"/>
</dbReference>
<dbReference type="GO" id="GO:0019843">
    <property type="term" value="F:rRNA binding"/>
    <property type="evidence" value="ECO:0007669"/>
    <property type="project" value="UniProtKB-UniRule"/>
</dbReference>
<dbReference type="GO" id="GO:0003735">
    <property type="term" value="F:structural constituent of ribosome"/>
    <property type="evidence" value="ECO:0000318"/>
    <property type="project" value="GO_Central"/>
</dbReference>
<dbReference type="GO" id="GO:0000049">
    <property type="term" value="F:tRNA binding"/>
    <property type="evidence" value="ECO:0007669"/>
    <property type="project" value="UniProtKB-UniRule"/>
</dbReference>
<dbReference type="GO" id="GO:0006412">
    <property type="term" value="P:translation"/>
    <property type="evidence" value="ECO:0000318"/>
    <property type="project" value="GO_Central"/>
</dbReference>
<dbReference type="FunFam" id="3.30.1440.10:FF:000001">
    <property type="entry name" value="50S ribosomal protein L5"/>
    <property type="match status" value="1"/>
</dbReference>
<dbReference type="Gene3D" id="3.30.1440.10">
    <property type="match status" value="1"/>
</dbReference>
<dbReference type="HAMAP" id="MF_01333_B">
    <property type="entry name" value="Ribosomal_uL5_B"/>
    <property type="match status" value="1"/>
</dbReference>
<dbReference type="InterPro" id="IPR002132">
    <property type="entry name" value="Ribosomal_uL5"/>
</dbReference>
<dbReference type="InterPro" id="IPR020930">
    <property type="entry name" value="Ribosomal_uL5_bac-type"/>
</dbReference>
<dbReference type="InterPro" id="IPR031309">
    <property type="entry name" value="Ribosomal_uL5_C"/>
</dbReference>
<dbReference type="InterPro" id="IPR020929">
    <property type="entry name" value="Ribosomal_uL5_CS"/>
</dbReference>
<dbReference type="InterPro" id="IPR022803">
    <property type="entry name" value="Ribosomal_uL5_dom_sf"/>
</dbReference>
<dbReference type="InterPro" id="IPR031310">
    <property type="entry name" value="Ribosomal_uL5_N"/>
</dbReference>
<dbReference type="NCBIfam" id="NF000585">
    <property type="entry name" value="PRK00010.1"/>
    <property type="match status" value="1"/>
</dbReference>
<dbReference type="PANTHER" id="PTHR11994">
    <property type="entry name" value="60S RIBOSOMAL PROTEIN L11-RELATED"/>
    <property type="match status" value="1"/>
</dbReference>
<dbReference type="Pfam" id="PF00281">
    <property type="entry name" value="Ribosomal_L5"/>
    <property type="match status" value="1"/>
</dbReference>
<dbReference type="Pfam" id="PF00673">
    <property type="entry name" value="Ribosomal_L5_C"/>
    <property type="match status" value="1"/>
</dbReference>
<dbReference type="PIRSF" id="PIRSF002161">
    <property type="entry name" value="Ribosomal_L5"/>
    <property type="match status" value="1"/>
</dbReference>
<dbReference type="SUPFAM" id="SSF55282">
    <property type="entry name" value="RL5-like"/>
    <property type="match status" value="1"/>
</dbReference>
<dbReference type="PROSITE" id="PS00358">
    <property type="entry name" value="RIBOSOMAL_L5"/>
    <property type="match status" value="1"/>
</dbReference>
<proteinExistence type="inferred from homology"/>
<organism>
    <name type="scientific">Salmonella typhimurium (strain LT2 / SGSC1412 / ATCC 700720)</name>
    <dbReference type="NCBI Taxonomy" id="99287"/>
    <lineage>
        <taxon>Bacteria</taxon>
        <taxon>Pseudomonadati</taxon>
        <taxon>Pseudomonadota</taxon>
        <taxon>Gammaproteobacteria</taxon>
        <taxon>Enterobacterales</taxon>
        <taxon>Enterobacteriaceae</taxon>
        <taxon>Salmonella</taxon>
    </lineage>
</organism>
<keyword id="KW-1185">Reference proteome</keyword>
<keyword id="KW-0687">Ribonucleoprotein</keyword>
<keyword id="KW-0689">Ribosomal protein</keyword>
<keyword id="KW-0694">RNA-binding</keyword>
<keyword id="KW-0699">rRNA-binding</keyword>
<keyword id="KW-0820">tRNA-binding</keyword>
<comment type="function">
    <text evidence="2">This is one of the proteins that bind and probably mediate the attachment of the 5S RNA into the large ribosomal subunit, where it forms part of the central protuberance. In the 70S ribosome it contacts protein S13 of the 30S subunit (bridge B1b), connecting the 2 subunits; this bridge is implicated in subunit movement. Contacts the P site tRNA; the 5S rRNA and some of its associated proteins might help stabilize positioning of ribosome-bound tRNAs.</text>
</comment>
<comment type="subunit">
    <text evidence="2">Part of the 50S ribosomal subunit; part of the 5S rRNA/L5/L18/L25 subcomplex. Contacts the 5S rRNA and the P site tRNA. Forms a bridge to the 30S subunit in the 70S ribosome.</text>
</comment>
<comment type="similarity">
    <text evidence="2">Belongs to the universal ribosomal protein uL5 family.</text>
</comment>
<reference key="1">
    <citation type="journal article" date="2001" name="Nature">
        <title>Complete genome sequence of Salmonella enterica serovar Typhimurium LT2.</title>
        <authorList>
            <person name="McClelland M."/>
            <person name="Sanderson K.E."/>
            <person name="Spieth J."/>
            <person name="Clifton S.W."/>
            <person name="Latreille P."/>
            <person name="Courtney L."/>
            <person name="Porwollik S."/>
            <person name="Ali J."/>
            <person name="Dante M."/>
            <person name="Du F."/>
            <person name="Hou S."/>
            <person name="Layman D."/>
            <person name="Leonard S."/>
            <person name="Nguyen C."/>
            <person name="Scott K."/>
            <person name="Holmes A."/>
            <person name="Grewal N."/>
            <person name="Mulvaney E."/>
            <person name="Ryan E."/>
            <person name="Sun H."/>
            <person name="Florea L."/>
            <person name="Miller W."/>
            <person name="Stoneking T."/>
            <person name="Nhan M."/>
            <person name="Waterston R."/>
            <person name="Wilson R.K."/>
        </authorList>
    </citation>
    <scope>NUCLEOTIDE SEQUENCE [LARGE SCALE GENOMIC DNA]</scope>
    <source>
        <strain>LT2 / SGSC1412 / ATCC 700720</strain>
    </source>
</reference>
<reference key="2">
    <citation type="journal article" date="1988" name="J. Mol. Biol.">
        <title>Translational regulation of the spc operon in Escherichia coli. Identification and structural analysis of the target site for S8 repressor protein.</title>
        <authorList>
            <person name="Cerretti D.P."/>
            <person name="Mattheakis L.C."/>
            <person name="Kearney K.R."/>
            <person name="Vu L."/>
            <person name="Nomura M."/>
        </authorList>
    </citation>
    <scope>NUCLEOTIDE SEQUENCE [GENOMIC DNA] OF 1-43</scope>
    <source>
        <strain>NO36</strain>
    </source>
</reference>
<protein>
    <recommendedName>
        <fullName evidence="2">Large ribosomal subunit protein uL5</fullName>
    </recommendedName>
    <alternativeName>
        <fullName evidence="3">50S ribosomal protein L5</fullName>
    </alternativeName>
</protein>
<evidence type="ECO:0000250" key="1"/>
<evidence type="ECO:0000255" key="2">
    <source>
        <dbReference type="HAMAP-Rule" id="MF_01333"/>
    </source>
</evidence>
<evidence type="ECO:0000305" key="3"/>
<name>RL5_SALTY</name>